<sequence>MAGESFPFTSSTLRALRLQREWLDWEDRRRAAAQQCRRHRDLPCPQAQLLRPRRSCRDPAVHNALFSGDLQQLQILFQDEDAANMIVETVSNQLAWSAEQGFWVLTPKTKQTAPLTIAVARGYTDCARHLILQGAELDARIGGRAALHEACAQAHPDCVRLLLTFGAKANVSSEEGMTPLHLCTSPESLQCAKLLLEAGASVNVASQESEVTPLHVAAARGLEQHVALYLQNGADVALRTSQGETALNAACAGAEGPGSSRQHEAAARQLLEAGADPQAAGRKRHTPLHNACANGCGGLAELLLRHGASPGVTNGAGHTPMDCALQAVQDAPNWEPEVLFAALLDYGAQPVHPEMLKHCANFPRALEVLLNAYPCVPSCDPWVEAVLPELWQEHEAFYSSALSMENQPRQLQHLARLAVRAQLGSHCRQAAAQLPLPPLLRDYLLLGVEGRIQ</sequence>
<proteinExistence type="evidence at transcript level"/>
<gene>
    <name type="primary">Asb16</name>
</gene>
<evidence type="ECO:0000250" key="1"/>
<evidence type="ECO:0000255" key="2">
    <source>
        <dbReference type="PROSITE-ProRule" id="PRU00194"/>
    </source>
</evidence>
<evidence type="ECO:0000305" key="3"/>
<dbReference type="EMBL" id="AF403044">
    <property type="protein sequence ID" value="AAL57363.1"/>
    <property type="molecule type" value="mRNA"/>
</dbReference>
<dbReference type="EMBL" id="AK038411">
    <property type="protein sequence ID" value="BAC29990.1"/>
    <property type="molecule type" value="mRNA"/>
</dbReference>
<dbReference type="CCDS" id="CCDS25493.1"/>
<dbReference type="RefSeq" id="NP_683755.1">
    <property type="nucleotide sequence ID" value="NM_148953.3"/>
</dbReference>
<dbReference type="SMR" id="Q8VHS5"/>
<dbReference type="FunCoup" id="Q8VHS5">
    <property type="interactions" value="11"/>
</dbReference>
<dbReference type="STRING" id="10090.ENSMUSP00000038450"/>
<dbReference type="PhosphoSitePlus" id="Q8VHS5"/>
<dbReference type="PaxDb" id="10090-ENSMUSP00000038450"/>
<dbReference type="ProteomicsDB" id="277246"/>
<dbReference type="Antibodypedia" id="77181">
    <property type="antibodies" value="6 antibodies from 4 providers"/>
</dbReference>
<dbReference type="DNASU" id="217217"/>
<dbReference type="Ensembl" id="ENSMUST00000036467.5">
    <property type="protein sequence ID" value="ENSMUSP00000038450.5"/>
    <property type="gene ID" value="ENSMUSG00000034768.5"/>
</dbReference>
<dbReference type="GeneID" id="217217"/>
<dbReference type="KEGG" id="mmu:217217"/>
<dbReference type="UCSC" id="uc007lra.1">
    <property type="organism name" value="mouse"/>
</dbReference>
<dbReference type="AGR" id="MGI:2654437"/>
<dbReference type="CTD" id="92591"/>
<dbReference type="MGI" id="MGI:2654437">
    <property type="gene designation" value="Asb16"/>
</dbReference>
<dbReference type="VEuPathDB" id="HostDB:ENSMUSG00000034768"/>
<dbReference type="eggNOG" id="KOG0504">
    <property type="taxonomic scope" value="Eukaryota"/>
</dbReference>
<dbReference type="GeneTree" id="ENSGT00940000160773"/>
<dbReference type="HOGENOM" id="CLU_035721_2_0_1"/>
<dbReference type="InParanoid" id="Q8VHS5"/>
<dbReference type="OMA" id="VKLYLCY"/>
<dbReference type="OrthoDB" id="194358at2759"/>
<dbReference type="PhylomeDB" id="Q8VHS5"/>
<dbReference type="TreeFam" id="TF333494"/>
<dbReference type="Reactome" id="R-MMU-8951664">
    <property type="pathway name" value="Neddylation"/>
</dbReference>
<dbReference type="Reactome" id="R-MMU-983168">
    <property type="pathway name" value="Antigen processing: Ubiquitination &amp; Proteasome degradation"/>
</dbReference>
<dbReference type="UniPathway" id="UPA00143"/>
<dbReference type="BioGRID-ORCS" id="217217">
    <property type="hits" value="4 hits in 78 CRISPR screens"/>
</dbReference>
<dbReference type="ChiTaRS" id="Asb16">
    <property type="organism name" value="mouse"/>
</dbReference>
<dbReference type="PRO" id="PR:Q8VHS5"/>
<dbReference type="Proteomes" id="UP000000589">
    <property type="component" value="Chromosome 11"/>
</dbReference>
<dbReference type="RNAct" id="Q8VHS5">
    <property type="molecule type" value="protein"/>
</dbReference>
<dbReference type="Bgee" id="ENSMUSG00000034768">
    <property type="expression patterns" value="Expressed in hindlimb stylopod muscle and 24 other cell types or tissues"/>
</dbReference>
<dbReference type="GO" id="GO:0035556">
    <property type="term" value="P:intracellular signal transduction"/>
    <property type="evidence" value="ECO:0007669"/>
    <property type="project" value="InterPro"/>
</dbReference>
<dbReference type="GO" id="GO:0016567">
    <property type="term" value="P:protein ubiquitination"/>
    <property type="evidence" value="ECO:0007669"/>
    <property type="project" value="UniProtKB-UniPathway"/>
</dbReference>
<dbReference type="CDD" id="cd03716">
    <property type="entry name" value="SOCS_ASB_like"/>
    <property type="match status" value="1"/>
</dbReference>
<dbReference type="FunFam" id="1.25.40.20:FF:000154">
    <property type="entry name" value="Ankyrin repeat and SOCS box containing 10"/>
    <property type="match status" value="1"/>
</dbReference>
<dbReference type="FunFam" id="1.25.40.20:FF:000228">
    <property type="entry name" value="Ankyrin repeat and SOCS box containing 10"/>
    <property type="match status" value="1"/>
</dbReference>
<dbReference type="Gene3D" id="1.25.40.20">
    <property type="entry name" value="Ankyrin repeat-containing domain"/>
    <property type="match status" value="2"/>
</dbReference>
<dbReference type="Gene3D" id="1.10.750.20">
    <property type="entry name" value="SOCS box"/>
    <property type="match status" value="1"/>
</dbReference>
<dbReference type="InterPro" id="IPR051573">
    <property type="entry name" value="Ankyrin-SOCS_box_domain"/>
</dbReference>
<dbReference type="InterPro" id="IPR002110">
    <property type="entry name" value="Ankyrin_rpt"/>
</dbReference>
<dbReference type="InterPro" id="IPR036770">
    <property type="entry name" value="Ankyrin_rpt-contain_sf"/>
</dbReference>
<dbReference type="InterPro" id="IPR001496">
    <property type="entry name" value="SOCS_box"/>
</dbReference>
<dbReference type="InterPro" id="IPR036036">
    <property type="entry name" value="SOCS_box-like_dom_sf"/>
</dbReference>
<dbReference type="PANTHER" id="PTHR24136:SF15">
    <property type="entry name" value="ANK_REP_REGION DOMAIN-CONTAINING PROTEIN"/>
    <property type="match status" value="1"/>
</dbReference>
<dbReference type="PANTHER" id="PTHR24136">
    <property type="entry name" value="SOWAH (DROSOPHILA) HOMOLOG"/>
    <property type="match status" value="1"/>
</dbReference>
<dbReference type="Pfam" id="PF00023">
    <property type="entry name" value="Ank"/>
    <property type="match status" value="1"/>
</dbReference>
<dbReference type="Pfam" id="PF12796">
    <property type="entry name" value="Ank_2"/>
    <property type="match status" value="1"/>
</dbReference>
<dbReference type="Pfam" id="PF13857">
    <property type="entry name" value="Ank_5"/>
    <property type="match status" value="1"/>
</dbReference>
<dbReference type="Pfam" id="PF07525">
    <property type="entry name" value="SOCS_box"/>
    <property type="match status" value="1"/>
</dbReference>
<dbReference type="SMART" id="SM00248">
    <property type="entry name" value="ANK"/>
    <property type="match status" value="6"/>
</dbReference>
<dbReference type="SMART" id="SM00969">
    <property type="entry name" value="SOCS_box"/>
    <property type="match status" value="1"/>
</dbReference>
<dbReference type="SUPFAM" id="SSF48403">
    <property type="entry name" value="Ankyrin repeat"/>
    <property type="match status" value="1"/>
</dbReference>
<dbReference type="SUPFAM" id="SSF158235">
    <property type="entry name" value="SOCS box-like"/>
    <property type="match status" value="1"/>
</dbReference>
<dbReference type="PROSITE" id="PS50297">
    <property type="entry name" value="ANK_REP_REGION"/>
    <property type="match status" value="1"/>
</dbReference>
<dbReference type="PROSITE" id="PS50088">
    <property type="entry name" value="ANK_REPEAT"/>
    <property type="match status" value="4"/>
</dbReference>
<dbReference type="PROSITE" id="PS50225">
    <property type="entry name" value="SOCS"/>
    <property type="match status" value="1"/>
</dbReference>
<reference key="1">
    <citation type="submission" date="2001-07" db="EMBL/GenBank/DDBJ databases">
        <title>SOCS box proteins.</title>
        <authorList>
            <person name="Kile B.T."/>
            <person name="Nicola N.A."/>
        </authorList>
    </citation>
    <scope>NUCLEOTIDE SEQUENCE [MRNA]</scope>
</reference>
<reference key="2">
    <citation type="journal article" date="2005" name="Science">
        <title>The transcriptional landscape of the mammalian genome.</title>
        <authorList>
            <person name="Carninci P."/>
            <person name="Kasukawa T."/>
            <person name="Katayama S."/>
            <person name="Gough J."/>
            <person name="Frith M.C."/>
            <person name="Maeda N."/>
            <person name="Oyama R."/>
            <person name="Ravasi T."/>
            <person name="Lenhard B."/>
            <person name="Wells C."/>
            <person name="Kodzius R."/>
            <person name="Shimokawa K."/>
            <person name="Bajic V.B."/>
            <person name="Brenner S.E."/>
            <person name="Batalov S."/>
            <person name="Forrest A.R."/>
            <person name="Zavolan M."/>
            <person name="Davis M.J."/>
            <person name="Wilming L.G."/>
            <person name="Aidinis V."/>
            <person name="Allen J.E."/>
            <person name="Ambesi-Impiombato A."/>
            <person name="Apweiler R."/>
            <person name="Aturaliya R.N."/>
            <person name="Bailey T.L."/>
            <person name="Bansal M."/>
            <person name="Baxter L."/>
            <person name="Beisel K.W."/>
            <person name="Bersano T."/>
            <person name="Bono H."/>
            <person name="Chalk A.M."/>
            <person name="Chiu K.P."/>
            <person name="Choudhary V."/>
            <person name="Christoffels A."/>
            <person name="Clutterbuck D.R."/>
            <person name="Crowe M.L."/>
            <person name="Dalla E."/>
            <person name="Dalrymple B.P."/>
            <person name="de Bono B."/>
            <person name="Della Gatta G."/>
            <person name="di Bernardo D."/>
            <person name="Down T."/>
            <person name="Engstrom P."/>
            <person name="Fagiolini M."/>
            <person name="Faulkner G."/>
            <person name="Fletcher C.F."/>
            <person name="Fukushima T."/>
            <person name="Furuno M."/>
            <person name="Futaki S."/>
            <person name="Gariboldi M."/>
            <person name="Georgii-Hemming P."/>
            <person name="Gingeras T.R."/>
            <person name="Gojobori T."/>
            <person name="Green R.E."/>
            <person name="Gustincich S."/>
            <person name="Harbers M."/>
            <person name="Hayashi Y."/>
            <person name="Hensch T.K."/>
            <person name="Hirokawa N."/>
            <person name="Hill D."/>
            <person name="Huminiecki L."/>
            <person name="Iacono M."/>
            <person name="Ikeo K."/>
            <person name="Iwama A."/>
            <person name="Ishikawa T."/>
            <person name="Jakt M."/>
            <person name="Kanapin A."/>
            <person name="Katoh M."/>
            <person name="Kawasawa Y."/>
            <person name="Kelso J."/>
            <person name="Kitamura H."/>
            <person name="Kitano H."/>
            <person name="Kollias G."/>
            <person name="Krishnan S.P."/>
            <person name="Kruger A."/>
            <person name="Kummerfeld S.K."/>
            <person name="Kurochkin I.V."/>
            <person name="Lareau L.F."/>
            <person name="Lazarevic D."/>
            <person name="Lipovich L."/>
            <person name="Liu J."/>
            <person name="Liuni S."/>
            <person name="McWilliam S."/>
            <person name="Madan Babu M."/>
            <person name="Madera M."/>
            <person name="Marchionni L."/>
            <person name="Matsuda H."/>
            <person name="Matsuzawa S."/>
            <person name="Miki H."/>
            <person name="Mignone F."/>
            <person name="Miyake S."/>
            <person name="Morris K."/>
            <person name="Mottagui-Tabar S."/>
            <person name="Mulder N."/>
            <person name="Nakano N."/>
            <person name="Nakauchi H."/>
            <person name="Ng P."/>
            <person name="Nilsson R."/>
            <person name="Nishiguchi S."/>
            <person name="Nishikawa S."/>
            <person name="Nori F."/>
            <person name="Ohara O."/>
            <person name="Okazaki Y."/>
            <person name="Orlando V."/>
            <person name="Pang K.C."/>
            <person name="Pavan W.J."/>
            <person name="Pavesi G."/>
            <person name="Pesole G."/>
            <person name="Petrovsky N."/>
            <person name="Piazza S."/>
            <person name="Reed J."/>
            <person name="Reid J.F."/>
            <person name="Ring B.Z."/>
            <person name="Ringwald M."/>
            <person name="Rost B."/>
            <person name="Ruan Y."/>
            <person name="Salzberg S.L."/>
            <person name="Sandelin A."/>
            <person name="Schneider C."/>
            <person name="Schoenbach C."/>
            <person name="Sekiguchi K."/>
            <person name="Semple C.A."/>
            <person name="Seno S."/>
            <person name="Sessa L."/>
            <person name="Sheng Y."/>
            <person name="Shibata Y."/>
            <person name="Shimada H."/>
            <person name="Shimada K."/>
            <person name="Silva D."/>
            <person name="Sinclair B."/>
            <person name="Sperling S."/>
            <person name="Stupka E."/>
            <person name="Sugiura K."/>
            <person name="Sultana R."/>
            <person name="Takenaka Y."/>
            <person name="Taki K."/>
            <person name="Tammoja K."/>
            <person name="Tan S.L."/>
            <person name="Tang S."/>
            <person name="Taylor M.S."/>
            <person name="Tegner J."/>
            <person name="Teichmann S.A."/>
            <person name="Ueda H.R."/>
            <person name="van Nimwegen E."/>
            <person name="Verardo R."/>
            <person name="Wei C.L."/>
            <person name="Yagi K."/>
            <person name="Yamanishi H."/>
            <person name="Zabarovsky E."/>
            <person name="Zhu S."/>
            <person name="Zimmer A."/>
            <person name="Hide W."/>
            <person name="Bult C."/>
            <person name="Grimmond S.M."/>
            <person name="Teasdale R.D."/>
            <person name="Liu E.T."/>
            <person name="Brusic V."/>
            <person name="Quackenbush J."/>
            <person name="Wahlestedt C."/>
            <person name="Mattick J.S."/>
            <person name="Hume D.A."/>
            <person name="Kai C."/>
            <person name="Sasaki D."/>
            <person name="Tomaru Y."/>
            <person name="Fukuda S."/>
            <person name="Kanamori-Katayama M."/>
            <person name="Suzuki M."/>
            <person name="Aoki J."/>
            <person name="Arakawa T."/>
            <person name="Iida J."/>
            <person name="Imamura K."/>
            <person name="Itoh M."/>
            <person name="Kato T."/>
            <person name="Kawaji H."/>
            <person name="Kawagashira N."/>
            <person name="Kawashima T."/>
            <person name="Kojima M."/>
            <person name="Kondo S."/>
            <person name="Konno H."/>
            <person name="Nakano K."/>
            <person name="Ninomiya N."/>
            <person name="Nishio T."/>
            <person name="Okada M."/>
            <person name="Plessy C."/>
            <person name="Shibata K."/>
            <person name="Shiraki T."/>
            <person name="Suzuki S."/>
            <person name="Tagami M."/>
            <person name="Waki K."/>
            <person name="Watahiki A."/>
            <person name="Okamura-Oho Y."/>
            <person name="Suzuki H."/>
            <person name="Kawai J."/>
            <person name="Hayashizaki Y."/>
        </authorList>
    </citation>
    <scope>NUCLEOTIDE SEQUENCE [LARGE SCALE MRNA] OF 321-453</scope>
    <source>
        <strain>C57BL/6J</strain>
        <tissue>Hypothalamus</tissue>
    </source>
</reference>
<keyword id="KW-0040">ANK repeat</keyword>
<keyword id="KW-1185">Reference proteome</keyword>
<keyword id="KW-0677">Repeat</keyword>
<keyword id="KW-0833">Ubl conjugation pathway</keyword>
<protein>
    <recommendedName>
        <fullName>Ankyrin repeat and SOCS box protein 16</fullName>
        <shortName>ASB-16</shortName>
    </recommendedName>
</protein>
<organism>
    <name type="scientific">Mus musculus</name>
    <name type="common">Mouse</name>
    <dbReference type="NCBI Taxonomy" id="10090"/>
    <lineage>
        <taxon>Eukaryota</taxon>
        <taxon>Metazoa</taxon>
        <taxon>Chordata</taxon>
        <taxon>Craniata</taxon>
        <taxon>Vertebrata</taxon>
        <taxon>Euteleostomi</taxon>
        <taxon>Mammalia</taxon>
        <taxon>Eutheria</taxon>
        <taxon>Euarchontoglires</taxon>
        <taxon>Glires</taxon>
        <taxon>Rodentia</taxon>
        <taxon>Myomorpha</taxon>
        <taxon>Muroidea</taxon>
        <taxon>Muridae</taxon>
        <taxon>Murinae</taxon>
        <taxon>Mus</taxon>
        <taxon>Mus</taxon>
    </lineage>
</organism>
<accession>Q8VHS5</accession>
<accession>Q8BYT0</accession>
<comment type="function">
    <text evidence="1">May be a substrate-recognition component of a SCF-like ECS (Elongin-Cullin-SOCS-box protein) E3 ubiquitin-protein ligase complex which mediates the ubiquitination and subsequent proteasomal degradation of target proteins.</text>
</comment>
<comment type="pathway">
    <text>Protein modification; protein ubiquitination.</text>
</comment>
<comment type="domain">
    <text evidence="1">The SOCS box domain mediates the interaction with the Elongin BC complex, an adapter module in different E3 ubiquitin-protein ligase complexes.</text>
</comment>
<comment type="similarity">
    <text evidence="3">Belongs to the ankyrin SOCS box (ASB) family.</text>
</comment>
<feature type="chain" id="PRO_0000066957" description="Ankyrin repeat and SOCS box protein 16">
    <location>
        <begin position="1"/>
        <end position="453"/>
    </location>
</feature>
<feature type="repeat" description="ANK 1">
    <location>
        <begin position="56"/>
        <end position="85"/>
    </location>
</feature>
<feature type="repeat" description="ANK 2">
    <location>
        <begin position="110"/>
        <end position="139"/>
    </location>
</feature>
<feature type="repeat" description="ANK 3">
    <location>
        <begin position="142"/>
        <end position="171"/>
    </location>
</feature>
<feature type="repeat" description="ANK 4">
    <location>
        <begin position="175"/>
        <end position="204"/>
    </location>
</feature>
<feature type="repeat" description="ANK 5">
    <location>
        <begin position="209"/>
        <end position="238"/>
    </location>
</feature>
<feature type="repeat" description="ANK 6">
    <location>
        <begin position="242"/>
        <end position="279"/>
    </location>
</feature>
<feature type="repeat" description="ANK 7">
    <location>
        <begin position="283"/>
        <end position="312"/>
    </location>
</feature>
<feature type="domain" description="SOCS box" evidence="2">
    <location>
        <begin position="397"/>
        <end position="453"/>
    </location>
</feature>
<name>ASB16_MOUSE</name>